<protein>
    <recommendedName>
        <fullName evidence="1">Cysteine--tRNA ligase</fullName>
        <ecNumber evidence="1">6.1.1.16</ecNumber>
    </recommendedName>
    <alternativeName>
        <fullName evidence="1">Cysteinyl-tRNA synthetase</fullName>
        <shortName evidence="1">CysRS</shortName>
    </alternativeName>
</protein>
<reference key="1">
    <citation type="submission" date="2005-08" db="EMBL/GenBank/DDBJ databases">
        <title>Complete sequence of chromosome 1 of Synechococcus elongatus PCC 7942.</title>
        <authorList>
            <consortium name="US DOE Joint Genome Institute"/>
            <person name="Copeland A."/>
            <person name="Lucas S."/>
            <person name="Lapidus A."/>
            <person name="Barry K."/>
            <person name="Detter J.C."/>
            <person name="Glavina T."/>
            <person name="Hammon N."/>
            <person name="Israni S."/>
            <person name="Pitluck S."/>
            <person name="Schmutz J."/>
            <person name="Larimer F."/>
            <person name="Land M."/>
            <person name="Kyrpides N."/>
            <person name="Lykidis A."/>
            <person name="Golden S."/>
            <person name="Richardson P."/>
        </authorList>
    </citation>
    <scope>NUCLEOTIDE SEQUENCE [LARGE SCALE GENOMIC DNA]</scope>
    <source>
        <strain>ATCC 33912 / PCC 7942 / FACHB-805</strain>
    </source>
</reference>
<proteinExistence type="inferred from homology"/>
<keyword id="KW-0030">Aminoacyl-tRNA synthetase</keyword>
<keyword id="KW-0067">ATP-binding</keyword>
<keyword id="KW-0963">Cytoplasm</keyword>
<keyword id="KW-0436">Ligase</keyword>
<keyword id="KW-0479">Metal-binding</keyword>
<keyword id="KW-0547">Nucleotide-binding</keyword>
<keyword id="KW-0648">Protein biosynthesis</keyword>
<keyword id="KW-1185">Reference proteome</keyword>
<keyword id="KW-0862">Zinc</keyword>
<evidence type="ECO:0000255" key="1">
    <source>
        <dbReference type="HAMAP-Rule" id="MF_00041"/>
    </source>
</evidence>
<dbReference type="EC" id="6.1.1.16" evidence="1"/>
<dbReference type="EMBL" id="CP000100">
    <property type="protein sequence ID" value="ABB57692.1"/>
    <property type="molecule type" value="Genomic_DNA"/>
</dbReference>
<dbReference type="RefSeq" id="WP_011244736.1">
    <property type="nucleotide sequence ID" value="NZ_JACJTX010000001.1"/>
</dbReference>
<dbReference type="SMR" id="Q31MM7"/>
<dbReference type="STRING" id="1140.Synpcc7942_1662"/>
<dbReference type="PaxDb" id="1140-Synpcc7942_1662"/>
<dbReference type="GeneID" id="72430532"/>
<dbReference type="KEGG" id="syf:Synpcc7942_1662"/>
<dbReference type="eggNOG" id="COG0215">
    <property type="taxonomic scope" value="Bacteria"/>
</dbReference>
<dbReference type="HOGENOM" id="CLU_013528_0_1_3"/>
<dbReference type="OrthoDB" id="9815130at2"/>
<dbReference type="BioCyc" id="SYNEL:SYNPCC7942_1662-MONOMER"/>
<dbReference type="Proteomes" id="UP000889800">
    <property type="component" value="Chromosome"/>
</dbReference>
<dbReference type="GO" id="GO:0005829">
    <property type="term" value="C:cytosol"/>
    <property type="evidence" value="ECO:0007669"/>
    <property type="project" value="TreeGrafter"/>
</dbReference>
<dbReference type="GO" id="GO:0005524">
    <property type="term" value="F:ATP binding"/>
    <property type="evidence" value="ECO:0007669"/>
    <property type="project" value="UniProtKB-UniRule"/>
</dbReference>
<dbReference type="GO" id="GO:0004817">
    <property type="term" value="F:cysteine-tRNA ligase activity"/>
    <property type="evidence" value="ECO:0007669"/>
    <property type="project" value="UniProtKB-UniRule"/>
</dbReference>
<dbReference type="GO" id="GO:0008270">
    <property type="term" value="F:zinc ion binding"/>
    <property type="evidence" value="ECO:0007669"/>
    <property type="project" value="UniProtKB-UniRule"/>
</dbReference>
<dbReference type="GO" id="GO:0006423">
    <property type="term" value="P:cysteinyl-tRNA aminoacylation"/>
    <property type="evidence" value="ECO:0007669"/>
    <property type="project" value="UniProtKB-UniRule"/>
</dbReference>
<dbReference type="CDD" id="cd00672">
    <property type="entry name" value="CysRS_core"/>
    <property type="match status" value="1"/>
</dbReference>
<dbReference type="FunFam" id="3.40.50.620:FF:000009">
    <property type="entry name" value="Cysteine--tRNA ligase"/>
    <property type="match status" value="1"/>
</dbReference>
<dbReference type="Gene3D" id="1.20.120.1910">
    <property type="entry name" value="Cysteine-tRNA ligase, C-terminal anti-codon recognition domain"/>
    <property type="match status" value="1"/>
</dbReference>
<dbReference type="Gene3D" id="3.40.50.620">
    <property type="entry name" value="HUPs"/>
    <property type="match status" value="1"/>
</dbReference>
<dbReference type="HAMAP" id="MF_00041">
    <property type="entry name" value="Cys_tRNA_synth"/>
    <property type="match status" value="1"/>
</dbReference>
<dbReference type="InterPro" id="IPR015803">
    <property type="entry name" value="Cys-tRNA-ligase"/>
</dbReference>
<dbReference type="InterPro" id="IPR015273">
    <property type="entry name" value="Cys-tRNA-synt_Ia_DALR"/>
</dbReference>
<dbReference type="InterPro" id="IPR024909">
    <property type="entry name" value="Cys-tRNA/MSH_ligase"/>
</dbReference>
<dbReference type="InterPro" id="IPR014729">
    <property type="entry name" value="Rossmann-like_a/b/a_fold"/>
</dbReference>
<dbReference type="InterPro" id="IPR032678">
    <property type="entry name" value="tRNA-synt_1_cat_dom"/>
</dbReference>
<dbReference type="InterPro" id="IPR009080">
    <property type="entry name" value="tRNAsynth_Ia_anticodon-bd"/>
</dbReference>
<dbReference type="NCBIfam" id="TIGR00435">
    <property type="entry name" value="cysS"/>
    <property type="match status" value="1"/>
</dbReference>
<dbReference type="PANTHER" id="PTHR10890:SF3">
    <property type="entry name" value="CYSTEINE--TRNA LIGASE, CYTOPLASMIC"/>
    <property type="match status" value="1"/>
</dbReference>
<dbReference type="PANTHER" id="PTHR10890">
    <property type="entry name" value="CYSTEINYL-TRNA SYNTHETASE"/>
    <property type="match status" value="1"/>
</dbReference>
<dbReference type="Pfam" id="PF09190">
    <property type="entry name" value="DALR_2"/>
    <property type="match status" value="1"/>
</dbReference>
<dbReference type="Pfam" id="PF01406">
    <property type="entry name" value="tRNA-synt_1e"/>
    <property type="match status" value="1"/>
</dbReference>
<dbReference type="PRINTS" id="PR00983">
    <property type="entry name" value="TRNASYNTHCYS"/>
</dbReference>
<dbReference type="SMART" id="SM00840">
    <property type="entry name" value="DALR_2"/>
    <property type="match status" value="1"/>
</dbReference>
<dbReference type="SUPFAM" id="SSF47323">
    <property type="entry name" value="Anticodon-binding domain of a subclass of class I aminoacyl-tRNA synthetases"/>
    <property type="match status" value="1"/>
</dbReference>
<dbReference type="SUPFAM" id="SSF52374">
    <property type="entry name" value="Nucleotidylyl transferase"/>
    <property type="match status" value="1"/>
</dbReference>
<organism>
    <name type="scientific">Synechococcus elongatus (strain ATCC 33912 / PCC 7942 / FACHB-805)</name>
    <name type="common">Anacystis nidulans R2</name>
    <dbReference type="NCBI Taxonomy" id="1140"/>
    <lineage>
        <taxon>Bacteria</taxon>
        <taxon>Bacillati</taxon>
        <taxon>Cyanobacteriota</taxon>
        <taxon>Cyanophyceae</taxon>
        <taxon>Synechococcales</taxon>
        <taxon>Synechococcaceae</taxon>
        <taxon>Synechococcus</taxon>
    </lineage>
</organism>
<comment type="catalytic activity">
    <reaction evidence="1">
        <text>tRNA(Cys) + L-cysteine + ATP = L-cysteinyl-tRNA(Cys) + AMP + diphosphate</text>
        <dbReference type="Rhea" id="RHEA:17773"/>
        <dbReference type="Rhea" id="RHEA-COMP:9661"/>
        <dbReference type="Rhea" id="RHEA-COMP:9679"/>
        <dbReference type="ChEBI" id="CHEBI:30616"/>
        <dbReference type="ChEBI" id="CHEBI:33019"/>
        <dbReference type="ChEBI" id="CHEBI:35235"/>
        <dbReference type="ChEBI" id="CHEBI:78442"/>
        <dbReference type="ChEBI" id="CHEBI:78517"/>
        <dbReference type="ChEBI" id="CHEBI:456215"/>
        <dbReference type="EC" id="6.1.1.16"/>
    </reaction>
</comment>
<comment type="cofactor">
    <cofactor evidence="1">
        <name>Zn(2+)</name>
        <dbReference type="ChEBI" id="CHEBI:29105"/>
    </cofactor>
    <text evidence="1">Binds 1 zinc ion per subunit.</text>
</comment>
<comment type="subunit">
    <text evidence="1">Monomer.</text>
</comment>
<comment type="subcellular location">
    <subcellularLocation>
        <location evidence="1">Cytoplasm</location>
    </subcellularLocation>
</comment>
<comment type="similarity">
    <text evidence="1">Belongs to the class-I aminoacyl-tRNA synthetase family.</text>
</comment>
<accession>Q31MM7</accession>
<feature type="chain" id="PRO_0000240968" description="Cysteine--tRNA ligase">
    <location>
        <begin position="1"/>
        <end position="478"/>
    </location>
</feature>
<feature type="short sequence motif" description="'HIGH' region">
    <location>
        <begin position="31"/>
        <end position="41"/>
    </location>
</feature>
<feature type="short sequence motif" description="'KMSKS' region">
    <location>
        <begin position="270"/>
        <end position="274"/>
    </location>
</feature>
<feature type="binding site" evidence="1">
    <location>
        <position position="29"/>
    </location>
    <ligand>
        <name>Zn(2+)</name>
        <dbReference type="ChEBI" id="CHEBI:29105"/>
    </ligand>
</feature>
<feature type="binding site" evidence="1">
    <location>
        <position position="213"/>
    </location>
    <ligand>
        <name>Zn(2+)</name>
        <dbReference type="ChEBI" id="CHEBI:29105"/>
    </ligand>
</feature>
<feature type="binding site" evidence="1">
    <location>
        <position position="238"/>
    </location>
    <ligand>
        <name>Zn(2+)</name>
        <dbReference type="ChEBI" id="CHEBI:29105"/>
    </ligand>
</feature>
<feature type="binding site" evidence="1">
    <location>
        <position position="242"/>
    </location>
    <ligand>
        <name>Zn(2+)</name>
        <dbReference type="ChEBI" id="CHEBI:29105"/>
    </ligand>
</feature>
<feature type="binding site" evidence="1">
    <location>
        <position position="273"/>
    </location>
    <ligand>
        <name>ATP</name>
        <dbReference type="ChEBI" id="CHEBI:30616"/>
    </ligand>
</feature>
<sequence>MTLSLYNTLTRQKQRFEPLQAGSVSLYCCGVTVYDYCHLGHARSYIVWDTLRRYLLWLGYRVRYVQNFTDIDDKILRRSRQEGTTMQAIADRYTQAYFEDMARLNILEADDYPRATHTLDGIQRLIAELEDKGFAYAADGDVYFSVRRFQDYGKLSGRKLEDLKAGASGRVESAEESLKHDPFDFALWKAAKPEEPAWDSPWGPGRPGWHIECSAMVRDRLGDSIDIHVGGADLVFPHHENEIAQSEAVTGHPLARYWLHNGMVNVGGEKMSKSLGNFTTIRQLLDEGGISPMVLRLFVLQANYRKPIDFTDEALQACQNGWETLQEGLHFGEHWGDRLGWTESVTVDPDLSDRFRMAMDDDLNTPAALAVLFELAKELRRQQNLLIHEGHLDGDAQQLHQHWVTLVQLAGVLGLEAEPELAETNELDEAAIEDWIAKRHAARQAKDFAEADRIRHYLADLGITLIDQAGGITRWSRT</sequence>
<gene>
    <name evidence="1" type="primary">cysS</name>
    <name type="ordered locus">Synpcc7942_1662</name>
</gene>
<name>SYC_SYNE7</name>